<evidence type="ECO:0000255" key="1">
    <source>
        <dbReference type="HAMAP-Rule" id="MF_00249"/>
    </source>
</evidence>
<name>HSLU_BACC7</name>
<comment type="function">
    <text evidence="1">ATPase subunit of a proteasome-like degradation complex; this subunit has chaperone activity. The binding of ATP and its subsequent hydrolysis by HslU are essential for unfolding of protein substrates subsequently hydrolyzed by HslV. HslU recognizes the N-terminal part of its protein substrates and unfolds these before they are guided to HslV for hydrolysis.</text>
</comment>
<comment type="subunit">
    <text evidence="1">A double ring-shaped homohexamer of HslV is capped on each side by a ring-shaped HslU homohexamer. The assembly of the HslU/HslV complex is dependent on binding of ATP.</text>
</comment>
<comment type="subcellular location">
    <subcellularLocation>
        <location evidence="1">Cytoplasm</location>
    </subcellularLocation>
</comment>
<comment type="similarity">
    <text evidence="1">Belongs to the ClpX chaperone family. HslU subfamily.</text>
</comment>
<gene>
    <name evidence="1" type="primary">hslU</name>
    <name type="ordered locus">BCAH187_A3876</name>
</gene>
<organism>
    <name type="scientific">Bacillus cereus (strain AH187)</name>
    <dbReference type="NCBI Taxonomy" id="405534"/>
    <lineage>
        <taxon>Bacteria</taxon>
        <taxon>Bacillati</taxon>
        <taxon>Bacillota</taxon>
        <taxon>Bacilli</taxon>
        <taxon>Bacillales</taxon>
        <taxon>Bacillaceae</taxon>
        <taxon>Bacillus</taxon>
        <taxon>Bacillus cereus group</taxon>
    </lineage>
</organism>
<sequence>MHLHFTPRQIVEKLDQYIIGQKDAKKAVAVALRNRYRRSKLAENLRDEIAPKNILMIGPTGVGKTEVARRMAKLVGAPFIKVEATKFTEVGYVGRDVESMVRDLVETSVRIVKEEMVVKVQDKAEEQANQRLVEILVPSPEKQSGFKNPLEMLFGGAQNSNQTTDSQEDVEIEKKRQDVERKLAAGLLEDEIVSIEVTEQQSSMFDMLQGTGMEQMGMNFQDALGSFMPKKTKKRKLSVKEARKVLTNEEAQRLIDMDEVTQEAVYRAEQLGIIFIDEIDKIAGKQSNSVDVSREGVQRDILPIVEGSNVATKYGSVKTDYILFVAAGAFHMSKPSDLIPELQGRFPIRVELTKLSTDDFVKILIEPDNALIKQYIALLATEGIEIEFSDEAIRKIAEIAYQVNQDTDNIGARRLHTIMEKLLEDLSFEASEITLEKITITPQYVEEKLATIAKNKDVSQFIL</sequence>
<accession>B7HLG2</accession>
<dbReference type="EMBL" id="CP001177">
    <property type="protein sequence ID" value="ACJ81810.1"/>
    <property type="molecule type" value="Genomic_DNA"/>
</dbReference>
<dbReference type="SMR" id="B7HLG2"/>
<dbReference type="KEGG" id="bcr:BCAH187_A3876"/>
<dbReference type="HOGENOM" id="CLU_033123_0_0_9"/>
<dbReference type="Proteomes" id="UP000002214">
    <property type="component" value="Chromosome"/>
</dbReference>
<dbReference type="GO" id="GO:0009376">
    <property type="term" value="C:HslUV protease complex"/>
    <property type="evidence" value="ECO:0007669"/>
    <property type="project" value="UniProtKB-UniRule"/>
</dbReference>
<dbReference type="GO" id="GO:0005524">
    <property type="term" value="F:ATP binding"/>
    <property type="evidence" value="ECO:0007669"/>
    <property type="project" value="UniProtKB-UniRule"/>
</dbReference>
<dbReference type="GO" id="GO:0016887">
    <property type="term" value="F:ATP hydrolysis activity"/>
    <property type="evidence" value="ECO:0007669"/>
    <property type="project" value="InterPro"/>
</dbReference>
<dbReference type="GO" id="GO:0008233">
    <property type="term" value="F:peptidase activity"/>
    <property type="evidence" value="ECO:0007669"/>
    <property type="project" value="InterPro"/>
</dbReference>
<dbReference type="GO" id="GO:0036402">
    <property type="term" value="F:proteasome-activating activity"/>
    <property type="evidence" value="ECO:0007669"/>
    <property type="project" value="UniProtKB-UniRule"/>
</dbReference>
<dbReference type="GO" id="GO:0043335">
    <property type="term" value="P:protein unfolding"/>
    <property type="evidence" value="ECO:0007669"/>
    <property type="project" value="UniProtKB-UniRule"/>
</dbReference>
<dbReference type="GO" id="GO:0051603">
    <property type="term" value="P:proteolysis involved in protein catabolic process"/>
    <property type="evidence" value="ECO:0007669"/>
    <property type="project" value="TreeGrafter"/>
</dbReference>
<dbReference type="CDD" id="cd19498">
    <property type="entry name" value="RecA-like_HslU"/>
    <property type="match status" value="1"/>
</dbReference>
<dbReference type="FunFam" id="3.40.50.300:FF:000220">
    <property type="entry name" value="ATP-dependent protease ATPase subunit HslU"/>
    <property type="match status" value="1"/>
</dbReference>
<dbReference type="Gene3D" id="1.10.8.60">
    <property type="match status" value="1"/>
</dbReference>
<dbReference type="Gene3D" id="1.10.8.10">
    <property type="entry name" value="DNA helicase RuvA subunit, C-terminal domain"/>
    <property type="match status" value="1"/>
</dbReference>
<dbReference type="Gene3D" id="3.40.50.300">
    <property type="entry name" value="P-loop containing nucleotide triphosphate hydrolases"/>
    <property type="match status" value="1"/>
</dbReference>
<dbReference type="HAMAP" id="MF_00249">
    <property type="entry name" value="HslU"/>
    <property type="match status" value="1"/>
</dbReference>
<dbReference type="InterPro" id="IPR003593">
    <property type="entry name" value="AAA+_ATPase"/>
</dbReference>
<dbReference type="InterPro" id="IPR050052">
    <property type="entry name" value="ATP-dep_Clp_protease_ClpX"/>
</dbReference>
<dbReference type="InterPro" id="IPR003959">
    <property type="entry name" value="ATPase_AAA_core"/>
</dbReference>
<dbReference type="InterPro" id="IPR019489">
    <property type="entry name" value="Clp_ATPase_C"/>
</dbReference>
<dbReference type="InterPro" id="IPR004491">
    <property type="entry name" value="HslU"/>
</dbReference>
<dbReference type="InterPro" id="IPR027417">
    <property type="entry name" value="P-loop_NTPase"/>
</dbReference>
<dbReference type="NCBIfam" id="TIGR00390">
    <property type="entry name" value="hslU"/>
    <property type="match status" value="1"/>
</dbReference>
<dbReference type="NCBIfam" id="NF003544">
    <property type="entry name" value="PRK05201.1"/>
    <property type="match status" value="1"/>
</dbReference>
<dbReference type="PANTHER" id="PTHR48102">
    <property type="entry name" value="ATP-DEPENDENT CLP PROTEASE ATP-BINDING SUBUNIT CLPX-LIKE, MITOCHONDRIAL-RELATED"/>
    <property type="match status" value="1"/>
</dbReference>
<dbReference type="PANTHER" id="PTHR48102:SF3">
    <property type="entry name" value="ATP-DEPENDENT PROTEASE ATPASE SUBUNIT HSLU"/>
    <property type="match status" value="1"/>
</dbReference>
<dbReference type="Pfam" id="PF00004">
    <property type="entry name" value="AAA"/>
    <property type="match status" value="1"/>
</dbReference>
<dbReference type="Pfam" id="PF07724">
    <property type="entry name" value="AAA_2"/>
    <property type="match status" value="1"/>
</dbReference>
<dbReference type="Pfam" id="PF10431">
    <property type="entry name" value="ClpB_D2-small"/>
    <property type="match status" value="1"/>
</dbReference>
<dbReference type="SMART" id="SM00382">
    <property type="entry name" value="AAA"/>
    <property type="match status" value="1"/>
</dbReference>
<dbReference type="SMART" id="SM01086">
    <property type="entry name" value="ClpB_D2-small"/>
    <property type="match status" value="1"/>
</dbReference>
<dbReference type="SUPFAM" id="SSF52540">
    <property type="entry name" value="P-loop containing nucleoside triphosphate hydrolases"/>
    <property type="match status" value="1"/>
</dbReference>
<feature type="chain" id="PRO_1000189691" description="ATP-dependent protease ATPase subunit HslU">
    <location>
        <begin position="1"/>
        <end position="463"/>
    </location>
</feature>
<feature type="binding site" evidence="1">
    <location>
        <position position="19"/>
    </location>
    <ligand>
        <name>ATP</name>
        <dbReference type="ChEBI" id="CHEBI:30616"/>
    </ligand>
</feature>
<feature type="binding site" evidence="1">
    <location>
        <begin position="61"/>
        <end position="66"/>
    </location>
    <ligand>
        <name>ATP</name>
        <dbReference type="ChEBI" id="CHEBI:30616"/>
    </ligand>
</feature>
<feature type="binding site" evidence="1">
    <location>
        <position position="277"/>
    </location>
    <ligand>
        <name>ATP</name>
        <dbReference type="ChEBI" id="CHEBI:30616"/>
    </ligand>
</feature>
<feature type="binding site" evidence="1">
    <location>
        <position position="341"/>
    </location>
    <ligand>
        <name>ATP</name>
        <dbReference type="ChEBI" id="CHEBI:30616"/>
    </ligand>
</feature>
<feature type="binding site" evidence="1">
    <location>
        <position position="413"/>
    </location>
    <ligand>
        <name>ATP</name>
        <dbReference type="ChEBI" id="CHEBI:30616"/>
    </ligand>
</feature>
<reference key="1">
    <citation type="submission" date="2008-10" db="EMBL/GenBank/DDBJ databases">
        <title>Genome sequence of Bacillus cereus AH187.</title>
        <authorList>
            <person name="Dodson R.J."/>
            <person name="Durkin A.S."/>
            <person name="Rosovitz M.J."/>
            <person name="Rasko D.A."/>
            <person name="Kolsto A.B."/>
            <person name="Okstad O.A."/>
            <person name="Ravel J."/>
            <person name="Sutton G."/>
        </authorList>
    </citation>
    <scope>NUCLEOTIDE SEQUENCE [LARGE SCALE GENOMIC DNA]</scope>
    <source>
        <strain>AH187</strain>
    </source>
</reference>
<protein>
    <recommendedName>
        <fullName evidence="1">ATP-dependent protease ATPase subunit HslU</fullName>
    </recommendedName>
    <alternativeName>
        <fullName evidence="1">Unfoldase HslU</fullName>
    </alternativeName>
</protein>
<keyword id="KW-0067">ATP-binding</keyword>
<keyword id="KW-0143">Chaperone</keyword>
<keyword id="KW-0963">Cytoplasm</keyword>
<keyword id="KW-0547">Nucleotide-binding</keyword>
<proteinExistence type="inferred from homology"/>